<sequence>MDHLPIFCQLRDRDCLIVGGGDVAERKARLLLDAGARLTVNALAFIPQFTAWADAGMLTLVEGPFDESLLDTCWLAIAATDDDALNQRVSEAAESRRIFCNVVDAPKAASFIMPSIIDRSPLMVAVSSGGTSPVLARLLREKLESLLPLHLGQVAKYAGQLRGRVKQQFATMGERRRFWEKLFVNDRLAQSLANNDQKAITETTEQLINEPLDHRGEVVLVGAGPGDAGLLTLKGLQQIQQADVVVYDRLVSDDIMNLVRRDADRVFVGKRAGYHCVPQEEINQILLREAQKGKRVVRLKGGDPFIFGRGGEELETLCNAGIPFSVVPGITAASGCSAYSGIPLTHRDYAQSVRLITGHLKTGGELDWENLAAEKQTLVFYMGLNQAATIQQKLIEHGMPGEMPVAIVENGTAVTQRVIDGTLTQLGELAQQMNSPSLIIIGRVVGLRDKLNWFSNH</sequence>
<organism>
    <name type="scientific">Escherichia coli O7:K1 (strain IAI39 / ExPEC)</name>
    <dbReference type="NCBI Taxonomy" id="585057"/>
    <lineage>
        <taxon>Bacteria</taxon>
        <taxon>Pseudomonadati</taxon>
        <taxon>Pseudomonadota</taxon>
        <taxon>Gammaproteobacteria</taxon>
        <taxon>Enterobacterales</taxon>
        <taxon>Enterobacteriaceae</taxon>
        <taxon>Escherichia</taxon>
    </lineage>
</organism>
<evidence type="ECO:0000255" key="1">
    <source>
        <dbReference type="HAMAP-Rule" id="MF_01646"/>
    </source>
</evidence>
<reference key="1">
    <citation type="journal article" date="2009" name="PLoS Genet.">
        <title>Organised genome dynamics in the Escherichia coli species results in highly diverse adaptive paths.</title>
        <authorList>
            <person name="Touchon M."/>
            <person name="Hoede C."/>
            <person name="Tenaillon O."/>
            <person name="Barbe V."/>
            <person name="Baeriswyl S."/>
            <person name="Bidet P."/>
            <person name="Bingen E."/>
            <person name="Bonacorsi S."/>
            <person name="Bouchier C."/>
            <person name="Bouvet O."/>
            <person name="Calteau A."/>
            <person name="Chiapello H."/>
            <person name="Clermont O."/>
            <person name="Cruveiller S."/>
            <person name="Danchin A."/>
            <person name="Diard M."/>
            <person name="Dossat C."/>
            <person name="Karoui M.E."/>
            <person name="Frapy E."/>
            <person name="Garry L."/>
            <person name="Ghigo J.M."/>
            <person name="Gilles A.M."/>
            <person name="Johnson J."/>
            <person name="Le Bouguenec C."/>
            <person name="Lescat M."/>
            <person name="Mangenot S."/>
            <person name="Martinez-Jehanne V."/>
            <person name="Matic I."/>
            <person name="Nassif X."/>
            <person name="Oztas S."/>
            <person name="Petit M.A."/>
            <person name="Pichon C."/>
            <person name="Rouy Z."/>
            <person name="Ruf C.S."/>
            <person name="Schneider D."/>
            <person name="Tourret J."/>
            <person name="Vacherie B."/>
            <person name="Vallenet D."/>
            <person name="Medigue C."/>
            <person name="Rocha E.P.C."/>
            <person name="Denamur E."/>
        </authorList>
    </citation>
    <scope>NUCLEOTIDE SEQUENCE [LARGE SCALE GENOMIC DNA]</scope>
    <source>
        <strain>IAI39 / ExPEC</strain>
    </source>
</reference>
<gene>
    <name evidence="1" type="primary">cysG</name>
    <name type="ordered locus">ECIAI39_3852</name>
</gene>
<proteinExistence type="inferred from homology"/>
<protein>
    <recommendedName>
        <fullName evidence="1">Siroheme synthase</fullName>
    </recommendedName>
    <domain>
        <recommendedName>
            <fullName evidence="1">Uroporphyrinogen-III C-methyltransferase</fullName>
            <shortName evidence="1">Urogen III methylase</shortName>
            <ecNumber evidence="1">2.1.1.107</ecNumber>
        </recommendedName>
        <alternativeName>
            <fullName evidence="1">SUMT</fullName>
        </alternativeName>
        <alternativeName>
            <fullName evidence="1">Uroporphyrinogen III methylase</fullName>
            <shortName evidence="1">UROM</shortName>
        </alternativeName>
    </domain>
    <domain>
        <recommendedName>
            <fullName evidence="1">Precorrin-2 dehydrogenase</fullName>
            <ecNumber evidence="1">1.3.1.76</ecNumber>
        </recommendedName>
    </domain>
    <domain>
        <recommendedName>
            <fullName evidence="1">Sirohydrochlorin ferrochelatase</fullName>
            <ecNumber evidence="1">4.99.1.4</ecNumber>
        </recommendedName>
    </domain>
</protein>
<dbReference type="EC" id="2.1.1.107" evidence="1"/>
<dbReference type="EC" id="1.3.1.76" evidence="1"/>
<dbReference type="EC" id="4.99.1.4" evidence="1"/>
<dbReference type="EMBL" id="CU928164">
    <property type="protein sequence ID" value="CAR19965.1"/>
    <property type="molecule type" value="Genomic_DNA"/>
</dbReference>
<dbReference type="RefSeq" id="WP_000349874.1">
    <property type="nucleotide sequence ID" value="NC_011750.1"/>
</dbReference>
<dbReference type="RefSeq" id="YP_002409746.1">
    <property type="nucleotide sequence ID" value="NC_011750.1"/>
</dbReference>
<dbReference type="SMR" id="B7NMD7"/>
<dbReference type="STRING" id="585057.ECIAI39_3852"/>
<dbReference type="KEGG" id="ect:ECIAI39_3852"/>
<dbReference type="PATRIC" id="fig|585057.6.peg.3988"/>
<dbReference type="HOGENOM" id="CLU_011276_2_0_6"/>
<dbReference type="UniPathway" id="UPA00148">
    <property type="reaction ID" value="UER00211"/>
</dbReference>
<dbReference type="UniPathway" id="UPA00148">
    <property type="reaction ID" value="UER00222"/>
</dbReference>
<dbReference type="UniPathway" id="UPA00262">
    <property type="reaction ID" value="UER00211"/>
</dbReference>
<dbReference type="UniPathway" id="UPA00262">
    <property type="reaction ID" value="UER00222"/>
</dbReference>
<dbReference type="UniPathway" id="UPA00262">
    <property type="reaction ID" value="UER00376"/>
</dbReference>
<dbReference type="Proteomes" id="UP000000749">
    <property type="component" value="Chromosome"/>
</dbReference>
<dbReference type="GO" id="GO:0051287">
    <property type="term" value="F:NAD binding"/>
    <property type="evidence" value="ECO:0007669"/>
    <property type="project" value="InterPro"/>
</dbReference>
<dbReference type="GO" id="GO:0043115">
    <property type="term" value="F:precorrin-2 dehydrogenase activity"/>
    <property type="evidence" value="ECO:0007669"/>
    <property type="project" value="UniProtKB-UniRule"/>
</dbReference>
<dbReference type="GO" id="GO:0051266">
    <property type="term" value="F:sirohydrochlorin ferrochelatase activity"/>
    <property type="evidence" value="ECO:0007669"/>
    <property type="project" value="UniProtKB-EC"/>
</dbReference>
<dbReference type="GO" id="GO:0004851">
    <property type="term" value="F:uroporphyrin-III C-methyltransferase activity"/>
    <property type="evidence" value="ECO:0007669"/>
    <property type="project" value="UniProtKB-UniRule"/>
</dbReference>
<dbReference type="GO" id="GO:0009236">
    <property type="term" value="P:cobalamin biosynthetic process"/>
    <property type="evidence" value="ECO:0007669"/>
    <property type="project" value="UniProtKB-UniRule"/>
</dbReference>
<dbReference type="GO" id="GO:0032259">
    <property type="term" value="P:methylation"/>
    <property type="evidence" value="ECO:0007669"/>
    <property type="project" value="UniProtKB-KW"/>
</dbReference>
<dbReference type="GO" id="GO:0019354">
    <property type="term" value="P:siroheme biosynthetic process"/>
    <property type="evidence" value="ECO:0007669"/>
    <property type="project" value="UniProtKB-UniRule"/>
</dbReference>
<dbReference type="CDD" id="cd11642">
    <property type="entry name" value="SUMT"/>
    <property type="match status" value="1"/>
</dbReference>
<dbReference type="FunFam" id="1.10.8.210:FF:000001">
    <property type="entry name" value="Siroheme synthase"/>
    <property type="match status" value="1"/>
</dbReference>
<dbReference type="FunFam" id="3.30.160.110:FF:000001">
    <property type="entry name" value="Siroheme synthase"/>
    <property type="match status" value="1"/>
</dbReference>
<dbReference type="FunFam" id="3.30.950.10:FF:000001">
    <property type="entry name" value="Siroheme synthase"/>
    <property type="match status" value="1"/>
</dbReference>
<dbReference type="FunFam" id="3.40.1010.10:FF:000001">
    <property type="entry name" value="Siroheme synthase"/>
    <property type="match status" value="1"/>
</dbReference>
<dbReference type="FunFam" id="3.40.50.720:FF:000092">
    <property type="entry name" value="Siroheme synthase"/>
    <property type="match status" value="1"/>
</dbReference>
<dbReference type="Gene3D" id="3.40.1010.10">
    <property type="entry name" value="Cobalt-precorrin-4 Transmethylase, Domain 1"/>
    <property type="match status" value="1"/>
</dbReference>
<dbReference type="Gene3D" id="3.30.950.10">
    <property type="entry name" value="Methyltransferase, Cobalt-precorrin-4 Transmethylase, Domain 2"/>
    <property type="match status" value="1"/>
</dbReference>
<dbReference type="Gene3D" id="3.40.50.720">
    <property type="entry name" value="NAD(P)-binding Rossmann-like Domain"/>
    <property type="match status" value="1"/>
</dbReference>
<dbReference type="Gene3D" id="1.10.8.210">
    <property type="entry name" value="Sirohaem synthase, dimerisation domain"/>
    <property type="match status" value="1"/>
</dbReference>
<dbReference type="Gene3D" id="3.30.160.110">
    <property type="entry name" value="Siroheme synthase, domain 2"/>
    <property type="match status" value="1"/>
</dbReference>
<dbReference type="HAMAP" id="MF_01646">
    <property type="entry name" value="Siroheme_synth"/>
    <property type="match status" value="1"/>
</dbReference>
<dbReference type="InterPro" id="IPR000878">
    <property type="entry name" value="4pyrrol_Mease"/>
</dbReference>
<dbReference type="InterPro" id="IPR035996">
    <property type="entry name" value="4pyrrol_Methylase_sf"/>
</dbReference>
<dbReference type="InterPro" id="IPR014777">
    <property type="entry name" value="4pyrrole_Mease_sub1"/>
</dbReference>
<dbReference type="InterPro" id="IPR014776">
    <property type="entry name" value="4pyrrole_Mease_sub2"/>
</dbReference>
<dbReference type="InterPro" id="IPR006366">
    <property type="entry name" value="CobA/CysG_C"/>
</dbReference>
<dbReference type="InterPro" id="IPR036291">
    <property type="entry name" value="NAD(P)-bd_dom_sf"/>
</dbReference>
<dbReference type="InterPro" id="IPR050161">
    <property type="entry name" value="Siro_Cobalamin_biosynth"/>
</dbReference>
<dbReference type="InterPro" id="IPR037115">
    <property type="entry name" value="Sirohaem_synt_dimer_dom_sf"/>
</dbReference>
<dbReference type="InterPro" id="IPR012409">
    <property type="entry name" value="Sirohaem_synth"/>
</dbReference>
<dbReference type="InterPro" id="IPR028281">
    <property type="entry name" value="Sirohaem_synthase_central"/>
</dbReference>
<dbReference type="InterPro" id="IPR019478">
    <property type="entry name" value="Sirohaem_synthase_dimer_dom"/>
</dbReference>
<dbReference type="InterPro" id="IPR006367">
    <property type="entry name" value="Sirohaem_synthase_N"/>
</dbReference>
<dbReference type="InterPro" id="IPR003043">
    <property type="entry name" value="Uropor_MeTrfase_CS"/>
</dbReference>
<dbReference type="NCBIfam" id="TIGR01469">
    <property type="entry name" value="cobA_cysG_Cterm"/>
    <property type="match status" value="1"/>
</dbReference>
<dbReference type="NCBIfam" id="TIGR01470">
    <property type="entry name" value="cysG_Nterm"/>
    <property type="match status" value="1"/>
</dbReference>
<dbReference type="NCBIfam" id="NF004790">
    <property type="entry name" value="PRK06136.1"/>
    <property type="match status" value="1"/>
</dbReference>
<dbReference type="NCBIfam" id="NF007922">
    <property type="entry name" value="PRK10637.1"/>
    <property type="match status" value="1"/>
</dbReference>
<dbReference type="PANTHER" id="PTHR45790:SF1">
    <property type="entry name" value="SIROHEME SYNTHASE"/>
    <property type="match status" value="1"/>
</dbReference>
<dbReference type="PANTHER" id="PTHR45790">
    <property type="entry name" value="SIROHEME SYNTHASE-RELATED"/>
    <property type="match status" value="1"/>
</dbReference>
<dbReference type="Pfam" id="PF10414">
    <property type="entry name" value="CysG_dimeriser"/>
    <property type="match status" value="1"/>
</dbReference>
<dbReference type="Pfam" id="PF13241">
    <property type="entry name" value="NAD_binding_7"/>
    <property type="match status" value="1"/>
</dbReference>
<dbReference type="Pfam" id="PF14824">
    <property type="entry name" value="Sirohm_synth_M"/>
    <property type="match status" value="1"/>
</dbReference>
<dbReference type="Pfam" id="PF00590">
    <property type="entry name" value="TP_methylase"/>
    <property type="match status" value="1"/>
</dbReference>
<dbReference type="PIRSF" id="PIRSF036426">
    <property type="entry name" value="Sirohaem_synth"/>
    <property type="match status" value="1"/>
</dbReference>
<dbReference type="SUPFAM" id="SSF51735">
    <property type="entry name" value="NAD(P)-binding Rossmann-fold domains"/>
    <property type="match status" value="1"/>
</dbReference>
<dbReference type="SUPFAM" id="SSF75615">
    <property type="entry name" value="Siroheme synthase middle domains-like"/>
    <property type="match status" value="1"/>
</dbReference>
<dbReference type="SUPFAM" id="SSF53790">
    <property type="entry name" value="Tetrapyrrole methylase"/>
    <property type="match status" value="1"/>
</dbReference>
<dbReference type="PROSITE" id="PS00839">
    <property type="entry name" value="SUMT_1"/>
    <property type="match status" value="1"/>
</dbReference>
<dbReference type="PROSITE" id="PS00840">
    <property type="entry name" value="SUMT_2"/>
    <property type="match status" value="1"/>
</dbReference>
<comment type="function">
    <text evidence="1">Multifunctional enzyme that catalyzes the SAM-dependent methylations of uroporphyrinogen III at position C-2 and C-7 to form precorrin-2 via precorrin-1. Then it catalyzes the NAD-dependent ring dehydrogenation of precorrin-2 to yield sirohydrochlorin. Finally, it catalyzes the ferrochelation of sirohydrochlorin to yield siroheme.</text>
</comment>
<comment type="catalytic activity">
    <reaction evidence="1">
        <text>uroporphyrinogen III + 2 S-adenosyl-L-methionine = precorrin-2 + 2 S-adenosyl-L-homocysteine + H(+)</text>
        <dbReference type="Rhea" id="RHEA:32459"/>
        <dbReference type="ChEBI" id="CHEBI:15378"/>
        <dbReference type="ChEBI" id="CHEBI:57308"/>
        <dbReference type="ChEBI" id="CHEBI:57856"/>
        <dbReference type="ChEBI" id="CHEBI:58827"/>
        <dbReference type="ChEBI" id="CHEBI:59789"/>
        <dbReference type="EC" id="2.1.1.107"/>
    </reaction>
</comment>
<comment type="catalytic activity">
    <reaction evidence="1">
        <text>precorrin-2 + NAD(+) = sirohydrochlorin + NADH + 2 H(+)</text>
        <dbReference type="Rhea" id="RHEA:15613"/>
        <dbReference type="ChEBI" id="CHEBI:15378"/>
        <dbReference type="ChEBI" id="CHEBI:57540"/>
        <dbReference type="ChEBI" id="CHEBI:57945"/>
        <dbReference type="ChEBI" id="CHEBI:58351"/>
        <dbReference type="ChEBI" id="CHEBI:58827"/>
        <dbReference type="EC" id="1.3.1.76"/>
    </reaction>
</comment>
<comment type="catalytic activity">
    <reaction evidence="1">
        <text>siroheme + 2 H(+) = sirohydrochlorin + Fe(2+)</text>
        <dbReference type="Rhea" id="RHEA:24360"/>
        <dbReference type="ChEBI" id="CHEBI:15378"/>
        <dbReference type="ChEBI" id="CHEBI:29033"/>
        <dbReference type="ChEBI" id="CHEBI:58351"/>
        <dbReference type="ChEBI" id="CHEBI:60052"/>
        <dbReference type="EC" id="4.99.1.4"/>
    </reaction>
</comment>
<comment type="pathway">
    <text evidence="1">Cofactor biosynthesis; adenosylcobalamin biosynthesis; precorrin-2 from uroporphyrinogen III: step 1/1.</text>
</comment>
<comment type="pathway">
    <text evidence="1">Cofactor biosynthesis; adenosylcobalamin biosynthesis; sirohydrochlorin from precorrin-2: step 1/1.</text>
</comment>
<comment type="pathway">
    <text evidence="1">Porphyrin-containing compound metabolism; siroheme biosynthesis; precorrin-2 from uroporphyrinogen III: step 1/1.</text>
</comment>
<comment type="pathway">
    <text evidence="1">Porphyrin-containing compound metabolism; siroheme biosynthesis; siroheme from sirohydrochlorin: step 1/1.</text>
</comment>
<comment type="pathway">
    <text evidence="1">Porphyrin-containing compound metabolism; siroheme biosynthesis; sirohydrochlorin from precorrin-2: step 1/1.</text>
</comment>
<comment type="similarity">
    <text evidence="1">In the N-terminal section; belongs to the precorrin-2 dehydrogenase / sirohydrochlorin ferrochelatase family.</text>
</comment>
<comment type="similarity">
    <text evidence="1">In the C-terminal section; belongs to the precorrin methyltransferase family.</text>
</comment>
<feature type="chain" id="PRO_1000186940" description="Siroheme synthase">
    <location>
        <begin position="1"/>
        <end position="457"/>
    </location>
</feature>
<feature type="region of interest" description="Precorrin-2 dehydrogenase /sirohydrochlorin ferrochelatase" evidence="1">
    <location>
        <begin position="1"/>
        <end position="204"/>
    </location>
</feature>
<feature type="region of interest" description="Uroporphyrinogen-III C-methyltransferase" evidence="1">
    <location>
        <begin position="216"/>
        <end position="457"/>
    </location>
</feature>
<feature type="active site" description="Proton acceptor" evidence="1">
    <location>
        <position position="248"/>
    </location>
</feature>
<feature type="active site" description="Proton donor" evidence="1">
    <location>
        <position position="270"/>
    </location>
</feature>
<feature type="binding site" evidence="1">
    <location>
        <begin position="22"/>
        <end position="23"/>
    </location>
    <ligand>
        <name>NAD(+)</name>
        <dbReference type="ChEBI" id="CHEBI:57540"/>
    </ligand>
</feature>
<feature type="binding site" evidence="1">
    <location>
        <begin position="43"/>
        <end position="44"/>
    </location>
    <ligand>
        <name>NAD(+)</name>
        <dbReference type="ChEBI" id="CHEBI:57540"/>
    </ligand>
</feature>
<feature type="binding site" evidence="1">
    <location>
        <position position="225"/>
    </location>
    <ligand>
        <name>S-adenosyl-L-methionine</name>
        <dbReference type="ChEBI" id="CHEBI:59789"/>
    </ligand>
</feature>
<feature type="binding site" evidence="1">
    <location>
        <begin position="301"/>
        <end position="303"/>
    </location>
    <ligand>
        <name>S-adenosyl-L-methionine</name>
        <dbReference type="ChEBI" id="CHEBI:59789"/>
    </ligand>
</feature>
<feature type="binding site" evidence="1">
    <location>
        <position position="306"/>
    </location>
    <ligand>
        <name>S-adenosyl-L-methionine</name>
        <dbReference type="ChEBI" id="CHEBI:59789"/>
    </ligand>
</feature>
<feature type="binding site" evidence="1">
    <location>
        <begin position="331"/>
        <end position="332"/>
    </location>
    <ligand>
        <name>S-adenosyl-L-methionine</name>
        <dbReference type="ChEBI" id="CHEBI:59789"/>
    </ligand>
</feature>
<feature type="binding site" evidence="1">
    <location>
        <position position="382"/>
    </location>
    <ligand>
        <name>S-adenosyl-L-methionine</name>
        <dbReference type="ChEBI" id="CHEBI:59789"/>
    </ligand>
</feature>
<feature type="binding site" evidence="1">
    <location>
        <position position="411"/>
    </location>
    <ligand>
        <name>S-adenosyl-L-methionine</name>
        <dbReference type="ChEBI" id="CHEBI:59789"/>
    </ligand>
</feature>
<feature type="modified residue" description="Phosphoserine" evidence="1">
    <location>
        <position position="128"/>
    </location>
</feature>
<accession>B7NMD7</accession>
<name>CYSG_ECO7I</name>
<keyword id="KW-0169">Cobalamin biosynthesis</keyword>
<keyword id="KW-0456">Lyase</keyword>
<keyword id="KW-0489">Methyltransferase</keyword>
<keyword id="KW-0511">Multifunctional enzyme</keyword>
<keyword id="KW-0520">NAD</keyword>
<keyword id="KW-0560">Oxidoreductase</keyword>
<keyword id="KW-0597">Phosphoprotein</keyword>
<keyword id="KW-0627">Porphyrin biosynthesis</keyword>
<keyword id="KW-0949">S-adenosyl-L-methionine</keyword>
<keyword id="KW-0808">Transferase</keyword>